<reference key="1">
    <citation type="journal article" date="2005" name="BMC Genomics">
        <title>Bacterial genome adaptation to niches: divergence of the potential virulence genes in three Burkholderia species of different survival strategies.</title>
        <authorList>
            <person name="Kim H.S."/>
            <person name="Schell M.A."/>
            <person name="Yu Y."/>
            <person name="Ulrich R.L."/>
            <person name="Sarria S.H."/>
            <person name="Nierman W.C."/>
            <person name="DeShazer D."/>
        </authorList>
    </citation>
    <scope>NUCLEOTIDE SEQUENCE [LARGE SCALE GENOMIC DNA]</scope>
    <source>
        <strain>ATCC 700388 / DSM 13276 / CCUG 48851 / CIP 106301 / E264</strain>
    </source>
</reference>
<dbReference type="EC" id="3.6.1.-" evidence="1"/>
<dbReference type="EMBL" id="CP000086">
    <property type="protein sequence ID" value="ABC36508.1"/>
    <property type="status" value="ALT_INIT"/>
    <property type="molecule type" value="Genomic_DNA"/>
</dbReference>
<dbReference type="RefSeq" id="WP_009889984.1">
    <property type="nucleotide sequence ID" value="NZ_CP008785.1"/>
</dbReference>
<dbReference type="SMR" id="Q2SXV1"/>
<dbReference type="GeneID" id="45121442"/>
<dbReference type="KEGG" id="bte:BTH_I1713"/>
<dbReference type="HOGENOM" id="CLU_040416_1_0_4"/>
<dbReference type="Proteomes" id="UP000001930">
    <property type="component" value="Chromosome I"/>
</dbReference>
<dbReference type="GO" id="GO:0005737">
    <property type="term" value="C:cytoplasm"/>
    <property type="evidence" value="ECO:0007669"/>
    <property type="project" value="UniProtKB-SubCell"/>
</dbReference>
<dbReference type="GO" id="GO:0047429">
    <property type="term" value="F:nucleoside triphosphate diphosphatase activity"/>
    <property type="evidence" value="ECO:0007669"/>
    <property type="project" value="InterPro"/>
</dbReference>
<dbReference type="GO" id="GO:0009117">
    <property type="term" value="P:nucleotide metabolic process"/>
    <property type="evidence" value="ECO:0007669"/>
    <property type="project" value="UniProtKB-KW"/>
</dbReference>
<dbReference type="CDD" id="cd00555">
    <property type="entry name" value="Maf"/>
    <property type="match status" value="1"/>
</dbReference>
<dbReference type="Gene3D" id="3.90.950.10">
    <property type="match status" value="1"/>
</dbReference>
<dbReference type="HAMAP" id="MF_00528">
    <property type="entry name" value="Maf"/>
    <property type="match status" value="1"/>
</dbReference>
<dbReference type="InterPro" id="IPR029001">
    <property type="entry name" value="ITPase-like_fam"/>
</dbReference>
<dbReference type="InterPro" id="IPR003697">
    <property type="entry name" value="Maf-like"/>
</dbReference>
<dbReference type="NCBIfam" id="TIGR00172">
    <property type="entry name" value="maf"/>
    <property type="match status" value="1"/>
</dbReference>
<dbReference type="PANTHER" id="PTHR43213">
    <property type="entry name" value="BIFUNCTIONAL DTTP/UTP PYROPHOSPHATASE/METHYLTRANSFERASE PROTEIN-RELATED"/>
    <property type="match status" value="1"/>
</dbReference>
<dbReference type="PANTHER" id="PTHR43213:SF5">
    <property type="entry name" value="BIFUNCTIONAL DTTP_UTP PYROPHOSPHATASE_METHYLTRANSFERASE PROTEIN-RELATED"/>
    <property type="match status" value="1"/>
</dbReference>
<dbReference type="Pfam" id="PF02545">
    <property type="entry name" value="Maf"/>
    <property type="match status" value="1"/>
</dbReference>
<dbReference type="PIRSF" id="PIRSF006305">
    <property type="entry name" value="Maf"/>
    <property type="match status" value="1"/>
</dbReference>
<dbReference type="SUPFAM" id="SSF52972">
    <property type="entry name" value="ITPase-like"/>
    <property type="match status" value="1"/>
</dbReference>
<keyword id="KW-0963">Cytoplasm</keyword>
<keyword id="KW-0378">Hydrolase</keyword>
<keyword id="KW-0546">Nucleotide metabolism</keyword>
<protein>
    <recommendedName>
        <fullName evidence="1">7-methyl-GTP pyrophosphatase</fullName>
        <shortName evidence="1">m(7)GTP pyrophosphatase</shortName>
        <ecNumber evidence="1">3.6.1.-</ecNumber>
    </recommendedName>
</protein>
<sequence>MQHDASSLPRLILASSSRYRRELLERLRAPFDVVTPEVDETPLPGETPSATALRLAAAKARAAAERVRAPHGALVIGSDQVATFDGLQIGKPGTHERALAQLQAMRGRDVEFHSALCLYDSRCGQTQIEDVVTRVRFRTLTDVELDAYLRAETPYDVAGSAKSEGLGIALLDAIDSDDPTALVGLPLIALTRMLRAAGYPLFDAPASAADGANGQ</sequence>
<organism>
    <name type="scientific">Burkholderia thailandensis (strain ATCC 700388 / DSM 13276 / CCUG 48851 / CIP 106301 / E264)</name>
    <dbReference type="NCBI Taxonomy" id="271848"/>
    <lineage>
        <taxon>Bacteria</taxon>
        <taxon>Pseudomonadati</taxon>
        <taxon>Pseudomonadota</taxon>
        <taxon>Betaproteobacteria</taxon>
        <taxon>Burkholderiales</taxon>
        <taxon>Burkholderiaceae</taxon>
        <taxon>Burkholderia</taxon>
        <taxon>pseudomallei group</taxon>
    </lineage>
</organism>
<accession>Q2SXV1</accession>
<evidence type="ECO:0000255" key="1">
    <source>
        <dbReference type="HAMAP-Rule" id="MF_00528"/>
    </source>
</evidence>
<evidence type="ECO:0000305" key="2"/>
<gene>
    <name type="ordered locus">BTH_I1713</name>
</gene>
<comment type="function">
    <text evidence="1">Nucleoside triphosphate pyrophosphatase that hydrolyzes 7-methyl-GTP (m(7)GTP). May have a dual role in cell division arrest and in preventing the incorporation of modified nucleotides into cellular nucleic acids.</text>
</comment>
<comment type="catalytic activity">
    <reaction evidence="1">
        <text>N(7)-methyl-GTP + H2O = N(7)-methyl-GMP + diphosphate + H(+)</text>
        <dbReference type="Rhea" id="RHEA:58744"/>
        <dbReference type="ChEBI" id="CHEBI:15377"/>
        <dbReference type="ChEBI" id="CHEBI:15378"/>
        <dbReference type="ChEBI" id="CHEBI:33019"/>
        <dbReference type="ChEBI" id="CHEBI:58285"/>
        <dbReference type="ChEBI" id="CHEBI:87133"/>
    </reaction>
</comment>
<comment type="cofactor">
    <cofactor evidence="1">
        <name>a divalent metal cation</name>
        <dbReference type="ChEBI" id="CHEBI:60240"/>
    </cofactor>
</comment>
<comment type="subcellular location">
    <subcellularLocation>
        <location evidence="1">Cytoplasm</location>
    </subcellularLocation>
</comment>
<comment type="similarity">
    <text evidence="1">Belongs to the Maf family. YceF subfamily.</text>
</comment>
<comment type="sequence caution" evidence="2">
    <conflict type="erroneous initiation">
        <sequence resource="EMBL-CDS" id="ABC36508"/>
    </conflict>
</comment>
<feature type="chain" id="PRO_0000267274" description="7-methyl-GTP pyrophosphatase">
    <location>
        <begin position="1"/>
        <end position="215"/>
    </location>
</feature>
<feature type="active site" description="Proton acceptor" evidence="1">
    <location>
        <position position="79"/>
    </location>
</feature>
<feature type="site" description="Important for substrate specificity" evidence="1">
    <location>
        <position position="19"/>
    </location>
</feature>
<feature type="site" description="Important for substrate specificity" evidence="1">
    <location>
        <position position="80"/>
    </location>
</feature>
<feature type="site" description="Important for substrate specificity" evidence="1">
    <location>
        <position position="164"/>
    </location>
</feature>
<name>NTPPB_BURTA</name>
<proteinExistence type="inferred from homology"/>